<feature type="chain" id="PRO_0000321534" description="Tetratricopeptide repeat protein 38">
    <location>
        <begin position="1"/>
        <end position="469"/>
    </location>
</feature>
<feature type="repeat" description="TPR 1">
    <location>
        <begin position="107"/>
        <end position="140"/>
    </location>
</feature>
<feature type="repeat" description="TPR 2">
    <location>
        <begin position="179"/>
        <end position="212"/>
    </location>
</feature>
<feature type="repeat" description="TPR 3">
    <location>
        <begin position="251"/>
        <end position="284"/>
    </location>
</feature>
<organism>
    <name type="scientific">Xenopus laevis</name>
    <name type="common">African clawed frog</name>
    <dbReference type="NCBI Taxonomy" id="8355"/>
    <lineage>
        <taxon>Eukaryota</taxon>
        <taxon>Metazoa</taxon>
        <taxon>Chordata</taxon>
        <taxon>Craniata</taxon>
        <taxon>Vertebrata</taxon>
        <taxon>Euteleostomi</taxon>
        <taxon>Amphibia</taxon>
        <taxon>Batrachia</taxon>
        <taxon>Anura</taxon>
        <taxon>Pipoidea</taxon>
        <taxon>Pipidae</taxon>
        <taxon>Xenopodinae</taxon>
        <taxon>Xenopus</taxon>
        <taxon>Xenopus</taxon>
    </lineage>
</organism>
<reference key="1">
    <citation type="submission" date="2006-12" db="EMBL/GenBank/DDBJ databases">
        <authorList>
            <consortium name="NIH - Xenopus Gene Collection (XGC) project"/>
        </authorList>
    </citation>
    <scope>NUCLEOTIDE SEQUENCE [LARGE SCALE MRNA]</scope>
    <source>
        <tissue>Intestine</tissue>
    </source>
</reference>
<gene>
    <name type="primary">ttc38</name>
</gene>
<comment type="similarity">
    <text evidence="1">Belongs to the TTC38 family.</text>
</comment>
<proteinExistence type="evidence at transcript level"/>
<accession>A2VD82</accession>
<sequence length="469" mass="52834">MAPLSLRDCKAWQDAGLTLSTTSNEVCKLFDATLIQYATWKNDSTLGGIEGCLSRINNTDPNFVMGHVAANGLELIGTGRSPLVDKELDDALKTMSDLSKSQALTEREKLHVAAVETFADGNLPKAADLWERILQSHPTDLLALKFAHDCYFYLGEQRQMRDSVARVLPYWKPETPLSSYVKGMYSFGLLETNFYDQALKVAKEALAVERTDSWSVHTIAHVHEMKADLDSGLSFMQETENNWKGSDMLACHVYWHWALYLIEKGDYEAALTLYDNHIAPQCFASGSMLDVVDNSSMLYRLQMEGVNVGDRWKNLVQITKKHTKDHMLIFNDLHFLMSSLGSKDEDTTRQLVESMQELSKSPGEKQQHSLIKHLGAPLCQALIEYNGGNYDKAVDLIYPIRYQILKIGGSDAQRDLFNQVLIQAAINSDSTHHQNLARVLLMERDIGRPNSPLTQRLIKKWEALHGLLG</sequence>
<protein>
    <recommendedName>
        <fullName>Tetratricopeptide repeat protein 38</fullName>
        <shortName>TPR repeat protein 38</shortName>
    </recommendedName>
</protein>
<dbReference type="EMBL" id="BC129593">
    <property type="protein sequence ID" value="AAI29594.1"/>
    <property type="molecule type" value="mRNA"/>
</dbReference>
<dbReference type="RefSeq" id="NP_001091346.1">
    <property type="nucleotide sequence ID" value="NM_001097877.1"/>
</dbReference>
<dbReference type="SMR" id="A2VD82"/>
<dbReference type="DNASU" id="100037185"/>
<dbReference type="GeneID" id="100037185"/>
<dbReference type="KEGG" id="xla:100037185"/>
<dbReference type="AGR" id="Xenbase:XB-GENE-5833300"/>
<dbReference type="CTD" id="100037185"/>
<dbReference type="Xenbase" id="XB-GENE-5833300">
    <property type="gene designation" value="ttc38.L"/>
</dbReference>
<dbReference type="OrthoDB" id="1427555at2759"/>
<dbReference type="Proteomes" id="UP000186698">
    <property type="component" value="Chromosome 3L"/>
</dbReference>
<dbReference type="Bgee" id="100037185">
    <property type="expression patterns" value="Expressed in intestine and 18 other cell types or tissues"/>
</dbReference>
<dbReference type="CDD" id="cd05804">
    <property type="entry name" value="StaR_like"/>
    <property type="match status" value="1"/>
</dbReference>
<dbReference type="Gene3D" id="1.25.40.10">
    <property type="entry name" value="Tetratricopeptide repeat domain"/>
    <property type="match status" value="1"/>
</dbReference>
<dbReference type="InterPro" id="IPR011990">
    <property type="entry name" value="TPR-like_helical_dom_sf"/>
</dbReference>
<dbReference type="InterPro" id="IPR033891">
    <property type="entry name" value="TTC38"/>
</dbReference>
<dbReference type="PANTHER" id="PTHR16263">
    <property type="entry name" value="TETRATRICOPEPTIDE REPEAT PROTEIN 38"/>
    <property type="match status" value="1"/>
</dbReference>
<dbReference type="PANTHER" id="PTHR16263:SF4">
    <property type="entry name" value="TETRATRICOPEPTIDE REPEAT PROTEIN 38"/>
    <property type="match status" value="1"/>
</dbReference>
<dbReference type="SUPFAM" id="SSF48452">
    <property type="entry name" value="TPR-like"/>
    <property type="match status" value="1"/>
</dbReference>
<keyword id="KW-1185">Reference proteome</keyword>
<keyword id="KW-0677">Repeat</keyword>
<keyword id="KW-0802">TPR repeat</keyword>
<evidence type="ECO:0000305" key="1"/>
<name>TTC38_XENLA</name>